<keyword id="KW-1185">Reference proteome</keyword>
<keyword id="KW-0694">RNA-binding</keyword>
<keyword id="KW-0804">Transcription</keyword>
<keyword id="KW-0889">Transcription antitermination</keyword>
<keyword id="KW-0805">Transcription regulation</keyword>
<dbReference type="EMBL" id="CP000507">
    <property type="protein sequence ID" value="ABL99227.1"/>
    <property type="molecule type" value="Genomic_DNA"/>
</dbReference>
<dbReference type="RefSeq" id="WP_011759136.1">
    <property type="nucleotide sequence ID" value="NC_008700.1"/>
</dbReference>
<dbReference type="SMR" id="A1S4C1"/>
<dbReference type="STRING" id="326297.Sama_1020"/>
<dbReference type="KEGG" id="saz:Sama_1020"/>
<dbReference type="eggNOG" id="COG0781">
    <property type="taxonomic scope" value="Bacteria"/>
</dbReference>
<dbReference type="HOGENOM" id="CLU_087843_4_1_6"/>
<dbReference type="OrthoDB" id="9789556at2"/>
<dbReference type="Proteomes" id="UP000009175">
    <property type="component" value="Chromosome"/>
</dbReference>
<dbReference type="GO" id="GO:0005829">
    <property type="term" value="C:cytosol"/>
    <property type="evidence" value="ECO:0007669"/>
    <property type="project" value="TreeGrafter"/>
</dbReference>
<dbReference type="GO" id="GO:0003723">
    <property type="term" value="F:RNA binding"/>
    <property type="evidence" value="ECO:0007669"/>
    <property type="project" value="UniProtKB-UniRule"/>
</dbReference>
<dbReference type="GO" id="GO:0006353">
    <property type="term" value="P:DNA-templated transcription termination"/>
    <property type="evidence" value="ECO:0007669"/>
    <property type="project" value="UniProtKB-UniRule"/>
</dbReference>
<dbReference type="GO" id="GO:0031564">
    <property type="term" value="P:transcription antitermination"/>
    <property type="evidence" value="ECO:0007669"/>
    <property type="project" value="UniProtKB-KW"/>
</dbReference>
<dbReference type="CDD" id="cd00619">
    <property type="entry name" value="Terminator_NusB"/>
    <property type="match status" value="1"/>
</dbReference>
<dbReference type="FunFam" id="1.10.940.10:FF:000001">
    <property type="entry name" value="Transcription antitermination factor NusB"/>
    <property type="match status" value="1"/>
</dbReference>
<dbReference type="Gene3D" id="1.10.940.10">
    <property type="entry name" value="NusB-like"/>
    <property type="match status" value="1"/>
</dbReference>
<dbReference type="HAMAP" id="MF_00073">
    <property type="entry name" value="NusB"/>
    <property type="match status" value="1"/>
</dbReference>
<dbReference type="InterPro" id="IPR035926">
    <property type="entry name" value="NusB-like_sf"/>
</dbReference>
<dbReference type="InterPro" id="IPR011605">
    <property type="entry name" value="NusB_fam"/>
</dbReference>
<dbReference type="InterPro" id="IPR006027">
    <property type="entry name" value="NusB_RsmB_TIM44"/>
</dbReference>
<dbReference type="NCBIfam" id="TIGR01951">
    <property type="entry name" value="nusB"/>
    <property type="match status" value="1"/>
</dbReference>
<dbReference type="PANTHER" id="PTHR11078:SF3">
    <property type="entry name" value="ANTITERMINATION NUSB DOMAIN-CONTAINING PROTEIN"/>
    <property type="match status" value="1"/>
</dbReference>
<dbReference type="PANTHER" id="PTHR11078">
    <property type="entry name" value="N UTILIZATION SUBSTANCE PROTEIN B-RELATED"/>
    <property type="match status" value="1"/>
</dbReference>
<dbReference type="Pfam" id="PF01029">
    <property type="entry name" value="NusB"/>
    <property type="match status" value="1"/>
</dbReference>
<dbReference type="SUPFAM" id="SSF48013">
    <property type="entry name" value="NusB-like"/>
    <property type="match status" value="1"/>
</dbReference>
<protein>
    <recommendedName>
        <fullName evidence="1">Transcription antitermination protein NusB</fullName>
    </recommendedName>
    <alternativeName>
        <fullName evidence="1">Antitermination factor NusB</fullName>
    </alternativeName>
</protein>
<sequence>MKPSERRKARRLAVQAIYSWQLSGNNVADVEHEFLTEQELDGVDVAYFRELFAGAATKTAQLDEKLKPLLDRPLEEVSPVEKAILRLAVYELTFRKDVPYKVVINEAIELAKSFGAEDGHKFVNGILDKLVARN</sequence>
<accession>A1S4C1</accession>
<comment type="function">
    <text evidence="1">Involved in transcription antitermination. Required for transcription of ribosomal RNA (rRNA) genes. Binds specifically to the boxA antiterminator sequence of the ribosomal RNA (rrn) operons.</text>
</comment>
<comment type="similarity">
    <text evidence="1">Belongs to the NusB family.</text>
</comment>
<feature type="chain" id="PRO_1000023769" description="Transcription antitermination protein NusB">
    <location>
        <begin position="1"/>
        <end position="134"/>
    </location>
</feature>
<reference key="1">
    <citation type="submission" date="2006-12" db="EMBL/GenBank/DDBJ databases">
        <title>Complete sequence of Shewanella amazonensis SB2B.</title>
        <authorList>
            <consortium name="US DOE Joint Genome Institute"/>
            <person name="Copeland A."/>
            <person name="Lucas S."/>
            <person name="Lapidus A."/>
            <person name="Barry K."/>
            <person name="Detter J.C."/>
            <person name="Glavina del Rio T."/>
            <person name="Hammon N."/>
            <person name="Israni S."/>
            <person name="Dalin E."/>
            <person name="Tice H."/>
            <person name="Pitluck S."/>
            <person name="Munk A.C."/>
            <person name="Brettin T."/>
            <person name="Bruce D."/>
            <person name="Han C."/>
            <person name="Tapia R."/>
            <person name="Gilna P."/>
            <person name="Schmutz J."/>
            <person name="Larimer F."/>
            <person name="Land M."/>
            <person name="Hauser L."/>
            <person name="Kyrpides N."/>
            <person name="Mikhailova N."/>
            <person name="Fredrickson J."/>
            <person name="Richardson P."/>
        </authorList>
    </citation>
    <scope>NUCLEOTIDE SEQUENCE [LARGE SCALE GENOMIC DNA]</scope>
    <source>
        <strain>ATCC BAA-1098 / SB2B</strain>
    </source>
</reference>
<proteinExistence type="inferred from homology"/>
<organism>
    <name type="scientific">Shewanella amazonensis (strain ATCC BAA-1098 / SB2B)</name>
    <dbReference type="NCBI Taxonomy" id="326297"/>
    <lineage>
        <taxon>Bacteria</taxon>
        <taxon>Pseudomonadati</taxon>
        <taxon>Pseudomonadota</taxon>
        <taxon>Gammaproteobacteria</taxon>
        <taxon>Alteromonadales</taxon>
        <taxon>Shewanellaceae</taxon>
        <taxon>Shewanella</taxon>
    </lineage>
</organism>
<name>NUSB_SHEAM</name>
<evidence type="ECO:0000255" key="1">
    <source>
        <dbReference type="HAMAP-Rule" id="MF_00073"/>
    </source>
</evidence>
<gene>
    <name evidence="1" type="primary">nusB</name>
    <name type="ordered locus">Sama_1020</name>
</gene>